<protein>
    <recommendedName>
        <fullName evidence="1">Glutamate-1-semialdehyde 2,1-aminomutase</fullName>
        <shortName evidence="1">GSA</shortName>
        <ecNumber evidence="1">5.4.3.8</ecNumber>
    </recommendedName>
    <alternativeName>
        <fullName evidence="1">Glutamate-1-semialdehyde aminotransferase</fullName>
        <shortName evidence="1">GSA-AT</shortName>
    </alternativeName>
</protein>
<comment type="catalytic activity">
    <reaction evidence="1">
        <text>(S)-4-amino-5-oxopentanoate = 5-aminolevulinate</text>
        <dbReference type="Rhea" id="RHEA:14265"/>
        <dbReference type="ChEBI" id="CHEBI:57501"/>
        <dbReference type="ChEBI" id="CHEBI:356416"/>
        <dbReference type="EC" id="5.4.3.8"/>
    </reaction>
</comment>
<comment type="cofactor">
    <cofactor evidence="1">
        <name>pyridoxal 5'-phosphate</name>
        <dbReference type="ChEBI" id="CHEBI:597326"/>
    </cofactor>
</comment>
<comment type="pathway">
    <text evidence="1">Porphyrin-containing compound metabolism; protoporphyrin-IX biosynthesis; 5-aminolevulinate from L-glutamyl-tRNA(Glu): step 2/2.</text>
</comment>
<comment type="subcellular location">
    <subcellularLocation>
        <location evidence="1">Cytoplasm</location>
    </subcellularLocation>
</comment>
<comment type="similarity">
    <text evidence="1">Belongs to the class-III pyridoxal-phosphate-dependent aminotransferase family. HemL subfamily.</text>
</comment>
<proteinExistence type="inferred from homology"/>
<accession>Q8TYL6</accession>
<feature type="chain" id="PRO_0000120483" description="Glutamate-1-semialdehyde 2,1-aminomutase">
    <location>
        <begin position="1"/>
        <end position="430"/>
    </location>
</feature>
<feature type="modified residue" description="N6-(pyridoxal phosphate)lysine" evidence="1">
    <location>
        <position position="268"/>
    </location>
</feature>
<name>GSA_METKA</name>
<dbReference type="EC" id="5.4.3.8" evidence="1"/>
<dbReference type="EMBL" id="AE009439">
    <property type="protein sequence ID" value="AAM01497.1"/>
    <property type="molecule type" value="Genomic_DNA"/>
</dbReference>
<dbReference type="RefSeq" id="WP_011018652.1">
    <property type="nucleotide sequence ID" value="NC_003551.1"/>
</dbReference>
<dbReference type="SMR" id="Q8TYL6"/>
<dbReference type="FunCoup" id="Q8TYL6">
    <property type="interactions" value="142"/>
</dbReference>
<dbReference type="STRING" id="190192.MK0280"/>
<dbReference type="PaxDb" id="190192-MK0280"/>
<dbReference type="EnsemblBacteria" id="AAM01497">
    <property type="protein sequence ID" value="AAM01497"/>
    <property type="gene ID" value="MK0280"/>
</dbReference>
<dbReference type="GeneID" id="1477583"/>
<dbReference type="KEGG" id="mka:MK0280"/>
<dbReference type="PATRIC" id="fig|190192.8.peg.283"/>
<dbReference type="HOGENOM" id="CLU_016922_1_5_2"/>
<dbReference type="InParanoid" id="Q8TYL6"/>
<dbReference type="OrthoDB" id="6524at2157"/>
<dbReference type="UniPathway" id="UPA00251">
    <property type="reaction ID" value="UER00317"/>
</dbReference>
<dbReference type="Proteomes" id="UP000001826">
    <property type="component" value="Chromosome"/>
</dbReference>
<dbReference type="GO" id="GO:0005737">
    <property type="term" value="C:cytoplasm"/>
    <property type="evidence" value="ECO:0007669"/>
    <property type="project" value="UniProtKB-SubCell"/>
</dbReference>
<dbReference type="GO" id="GO:0042286">
    <property type="term" value="F:glutamate-1-semialdehyde 2,1-aminomutase activity"/>
    <property type="evidence" value="ECO:0007669"/>
    <property type="project" value="UniProtKB-UniRule"/>
</dbReference>
<dbReference type="GO" id="GO:0030170">
    <property type="term" value="F:pyridoxal phosphate binding"/>
    <property type="evidence" value="ECO:0007669"/>
    <property type="project" value="InterPro"/>
</dbReference>
<dbReference type="GO" id="GO:0008483">
    <property type="term" value="F:transaminase activity"/>
    <property type="evidence" value="ECO:0007669"/>
    <property type="project" value="InterPro"/>
</dbReference>
<dbReference type="GO" id="GO:0006782">
    <property type="term" value="P:protoporphyrinogen IX biosynthetic process"/>
    <property type="evidence" value="ECO:0007669"/>
    <property type="project" value="UniProtKB-UniRule"/>
</dbReference>
<dbReference type="CDD" id="cd00610">
    <property type="entry name" value="OAT_like"/>
    <property type="match status" value="1"/>
</dbReference>
<dbReference type="FunFam" id="3.40.640.10:FF:000021">
    <property type="entry name" value="Glutamate-1-semialdehyde 2,1-aminomutase"/>
    <property type="match status" value="1"/>
</dbReference>
<dbReference type="Gene3D" id="3.90.1150.10">
    <property type="entry name" value="Aspartate Aminotransferase, domain 1"/>
    <property type="match status" value="1"/>
</dbReference>
<dbReference type="Gene3D" id="3.40.640.10">
    <property type="entry name" value="Type I PLP-dependent aspartate aminotransferase-like (Major domain)"/>
    <property type="match status" value="1"/>
</dbReference>
<dbReference type="HAMAP" id="MF_00375">
    <property type="entry name" value="HemL_aminotrans_3"/>
    <property type="match status" value="1"/>
</dbReference>
<dbReference type="InterPro" id="IPR004639">
    <property type="entry name" value="4pyrrol_synth_GluAld_NH2Trfase"/>
</dbReference>
<dbReference type="InterPro" id="IPR005814">
    <property type="entry name" value="Aminotrans_3"/>
</dbReference>
<dbReference type="InterPro" id="IPR049704">
    <property type="entry name" value="Aminotrans_3_PPA_site"/>
</dbReference>
<dbReference type="InterPro" id="IPR015424">
    <property type="entry name" value="PyrdxlP-dep_Trfase"/>
</dbReference>
<dbReference type="InterPro" id="IPR015421">
    <property type="entry name" value="PyrdxlP-dep_Trfase_major"/>
</dbReference>
<dbReference type="InterPro" id="IPR015422">
    <property type="entry name" value="PyrdxlP-dep_Trfase_small"/>
</dbReference>
<dbReference type="NCBIfam" id="TIGR00713">
    <property type="entry name" value="hemL"/>
    <property type="match status" value="1"/>
</dbReference>
<dbReference type="NCBIfam" id="NF000818">
    <property type="entry name" value="PRK00062.1"/>
    <property type="match status" value="1"/>
</dbReference>
<dbReference type="PANTHER" id="PTHR43713">
    <property type="entry name" value="GLUTAMATE-1-SEMIALDEHYDE 2,1-AMINOMUTASE"/>
    <property type="match status" value="1"/>
</dbReference>
<dbReference type="PANTHER" id="PTHR43713:SF3">
    <property type="entry name" value="GLUTAMATE-1-SEMIALDEHYDE 2,1-AMINOMUTASE 1, CHLOROPLASTIC-RELATED"/>
    <property type="match status" value="1"/>
</dbReference>
<dbReference type="Pfam" id="PF00202">
    <property type="entry name" value="Aminotran_3"/>
    <property type="match status" value="1"/>
</dbReference>
<dbReference type="SUPFAM" id="SSF53383">
    <property type="entry name" value="PLP-dependent transferases"/>
    <property type="match status" value="1"/>
</dbReference>
<dbReference type="PROSITE" id="PS00600">
    <property type="entry name" value="AA_TRANSFER_CLASS_3"/>
    <property type="match status" value="1"/>
</dbReference>
<gene>
    <name evidence="1" type="primary">hemL</name>
    <name type="ordered locus">MK0280</name>
</gene>
<evidence type="ECO:0000255" key="1">
    <source>
        <dbReference type="HAMAP-Rule" id="MF_00375"/>
    </source>
</evidence>
<reference key="1">
    <citation type="journal article" date="2002" name="Proc. Natl. Acad. Sci. U.S.A.">
        <title>The complete genome of hyperthermophile Methanopyrus kandleri AV19 and monophyly of archaeal methanogens.</title>
        <authorList>
            <person name="Slesarev A.I."/>
            <person name="Mezhevaya K.V."/>
            <person name="Makarova K.S."/>
            <person name="Polushin N.N."/>
            <person name="Shcherbinina O.V."/>
            <person name="Shakhova V.V."/>
            <person name="Belova G.I."/>
            <person name="Aravind L."/>
            <person name="Natale D.A."/>
            <person name="Rogozin I.B."/>
            <person name="Tatusov R.L."/>
            <person name="Wolf Y.I."/>
            <person name="Stetter K.O."/>
            <person name="Malykh A.G."/>
            <person name="Koonin E.V."/>
            <person name="Kozyavkin S.A."/>
        </authorList>
    </citation>
    <scope>NUCLEOTIDE SEQUENCE [LARGE SCALE GENOMIC DNA]</scope>
    <source>
        <strain>AV19 / DSM 6324 / JCM 9639 / NBRC 100938</strain>
    </source>
</reference>
<organism>
    <name type="scientific">Methanopyrus kandleri (strain AV19 / DSM 6324 / JCM 9639 / NBRC 100938)</name>
    <dbReference type="NCBI Taxonomy" id="190192"/>
    <lineage>
        <taxon>Archaea</taxon>
        <taxon>Methanobacteriati</taxon>
        <taxon>Methanobacteriota</taxon>
        <taxon>Methanomada group</taxon>
        <taxon>Methanopyri</taxon>
        <taxon>Methanopyrales</taxon>
        <taxon>Methanopyraceae</taxon>
        <taxon>Methanopyrus</taxon>
    </lineage>
</organism>
<keyword id="KW-0963">Cytoplasm</keyword>
<keyword id="KW-0413">Isomerase</keyword>
<keyword id="KW-0627">Porphyrin biosynthesis</keyword>
<keyword id="KW-0663">Pyridoxal phosphate</keyword>
<keyword id="KW-1185">Reference proteome</keyword>
<sequence length="430" mass="47421">MGYEDEFPESLELFKRAERVMPGGVSSPVRRFDPYPFYVERAEGSRLYTVDGHVLIDYCLAFGPLILGHAHPEVVEAVVERVREGFHYGTPTLPELKLAEKVVELVPNVEKVRLVNTGTEATMSAIRLARAYTGREKIVKFEGCYHGAHDAVLVRAGSGASELGAPDSPGIPESVAENTLVCPFNDVEAFVETVERFDEEIGAVIVEPVLGNAGCVPPDEEFLKVLREYCDGTERLLIFDEVITGFRLELGGAQEYYGIDADLVCLGKILGGGLPIGAFGGPEEYMSRVAPEGKVYQAGTFNGNPVSATAGLVTLEVLERERPYDELSSKAERLASALEDGLEDRGIEGVVNRVESMFQVYFGIEEVRDYADVNSADHDAFKRFHRELLEHGVWIAASNYEAWFLSIAHTETDLERTEEAFEEALDRLTG</sequence>